<comment type="function">
    <text evidence="1">One of the primary rRNA binding proteins, it binds directly to 16S rRNA where it helps nucleate assembly of the platform of the 30S subunit by binding and bridging several RNA helices of the 16S rRNA.</text>
</comment>
<comment type="function">
    <text evidence="1">Forms an intersubunit bridge (bridge B4) with the 23S rRNA of the 50S subunit in the ribosome.</text>
</comment>
<comment type="subunit">
    <text evidence="1">Part of the 30S ribosomal subunit. Forms a bridge to the 50S subunit in the 70S ribosome, contacting the 23S rRNA.</text>
</comment>
<comment type="similarity">
    <text evidence="1">Belongs to the universal ribosomal protein uS15 family.</text>
</comment>
<name>RS15_CHLTR</name>
<proteinExistence type="inferred from homology"/>
<dbReference type="EMBL" id="AE001273">
    <property type="protein sequence ID" value="AAC68440.2"/>
    <property type="molecule type" value="Genomic_DNA"/>
</dbReference>
<dbReference type="PIR" id="F71463">
    <property type="entry name" value="F71463"/>
</dbReference>
<dbReference type="RefSeq" id="NP_220364.1">
    <property type="nucleotide sequence ID" value="NC_000117.1"/>
</dbReference>
<dbReference type="RefSeq" id="WP_009872230.1">
    <property type="nucleotide sequence ID" value="NC_000117.1"/>
</dbReference>
<dbReference type="SMR" id="P66427"/>
<dbReference type="FunCoup" id="P66427">
    <property type="interactions" value="220"/>
</dbReference>
<dbReference type="STRING" id="272561.CT_843"/>
<dbReference type="EnsemblBacteria" id="AAC68440">
    <property type="protein sequence ID" value="AAC68440"/>
    <property type="gene ID" value="CT_843"/>
</dbReference>
<dbReference type="GeneID" id="884645"/>
<dbReference type="GeneID" id="93065722"/>
<dbReference type="KEGG" id="ctr:CT_843"/>
<dbReference type="PATRIC" id="fig|272561.5.peg.930"/>
<dbReference type="HOGENOM" id="CLU_148518_0_0_0"/>
<dbReference type="InParanoid" id="P66427"/>
<dbReference type="OrthoDB" id="9799262at2"/>
<dbReference type="PRO" id="PR:P66427"/>
<dbReference type="Proteomes" id="UP000000431">
    <property type="component" value="Chromosome"/>
</dbReference>
<dbReference type="GO" id="GO:0022627">
    <property type="term" value="C:cytosolic small ribosomal subunit"/>
    <property type="evidence" value="ECO:0000318"/>
    <property type="project" value="GO_Central"/>
</dbReference>
<dbReference type="GO" id="GO:0019843">
    <property type="term" value="F:rRNA binding"/>
    <property type="evidence" value="ECO:0007669"/>
    <property type="project" value="UniProtKB-UniRule"/>
</dbReference>
<dbReference type="GO" id="GO:0003735">
    <property type="term" value="F:structural constituent of ribosome"/>
    <property type="evidence" value="ECO:0007669"/>
    <property type="project" value="InterPro"/>
</dbReference>
<dbReference type="GO" id="GO:0006412">
    <property type="term" value="P:translation"/>
    <property type="evidence" value="ECO:0007669"/>
    <property type="project" value="UniProtKB-UniRule"/>
</dbReference>
<dbReference type="CDD" id="cd00353">
    <property type="entry name" value="Ribosomal_S15p_S13e"/>
    <property type="match status" value="1"/>
</dbReference>
<dbReference type="FunFam" id="1.10.287.10:FF:000002">
    <property type="entry name" value="30S ribosomal protein S15"/>
    <property type="match status" value="1"/>
</dbReference>
<dbReference type="Gene3D" id="6.10.250.3130">
    <property type="match status" value="1"/>
</dbReference>
<dbReference type="Gene3D" id="1.10.287.10">
    <property type="entry name" value="S15/NS1, RNA-binding"/>
    <property type="match status" value="1"/>
</dbReference>
<dbReference type="HAMAP" id="MF_01343_B">
    <property type="entry name" value="Ribosomal_uS15_B"/>
    <property type="match status" value="1"/>
</dbReference>
<dbReference type="InterPro" id="IPR000589">
    <property type="entry name" value="Ribosomal_uS15"/>
</dbReference>
<dbReference type="InterPro" id="IPR005290">
    <property type="entry name" value="Ribosomal_uS15_bac-type"/>
</dbReference>
<dbReference type="InterPro" id="IPR009068">
    <property type="entry name" value="uS15_NS1_RNA-bd_sf"/>
</dbReference>
<dbReference type="NCBIfam" id="TIGR00952">
    <property type="entry name" value="S15_bact"/>
    <property type="match status" value="1"/>
</dbReference>
<dbReference type="PANTHER" id="PTHR23321">
    <property type="entry name" value="RIBOSOMAL PROTEIN S15, BACTERIAL AND ORGANELLAR"/>
    <property type="match status" value="1"/>
</dbReference>
<dbReference type="PANTHER" id="PTHR23321:SF26">
    <property type="entry name" value="SMALL RIBOSOMAL SUBUNIT PROTEIN US15M"/>
    <property type="match status" value="1"/>
</dbReference>
<dbReference type="Pfam" id="PF00312">
    <property type="entry name" value="Ribosomal_S15"/>
    <property type="match status" value="1"/>
</dbReference>
<dbReference type="SMART" id="SM01387">
    <property type="entry name" value="Ribosomal_S15"/>
    <property type="match status" value="1"/>
</dbReference>
<dbReference type="SUPFAM" id="SSF47060">
    <property type="entry name" value="S15/NS1 RNA-binding domain"/>
    <property type="match status" value="1"/>
</dbReference>
<dbReference type="PROSITE" id="PS00362">
    <property type="entry name" value="RIBOSOMAL_S15"/>
    <property type="match status" value="1"/>
</dbReference>
<organism>
    <name type="scientific">Chlamydia trachomatis serovar D (strain ATCC VR-885 / DSM 19411 / UW-3/Cx)</name>
    <dbReference type="NCBI Taxonomy" id="272561"/>
    <lineage>
        <taxon>Bacteria</taxon>
        <taxon>Pseudomonadati</taxon>
        <taxon>Chlamydiota</taxon>
        <taxon>Chlamydiia</taxon>
        <taxon>Chlamydiales</taxon>
        <taxon>Chlamydiaceae</taxon>
        <taxon>Chlamydia/Chlamydophila group</taxon>
        <taxon>Chlamydia</taxon>
    </lineage>
</organism>
<reference key="1">
    <citation type="journal article" date="1998" name="Science">
        <title>Genome sequence of an obligate intracellular pathogen of humans: Chlamydia trachomatis.</title>
        <authorList>
            <person name="Stephens R.S."/>
            <person name="Kalman S."/>
            <person name="Lammel C.J."/>
            <person name="Fan J."/>
            <person name="Marathe R."/>
            <person name="Aravind L."/>
            <person name="Mitchell W.P."/>
            <person name="Olinger L."/>
            <person name="Tatusov R.L."/>
            <person name="Zhao Q."/>
            <person name="Koonin E.V."/>
            <person name="Davis R.W."/>
        </authorList>
    </citation>
    <scope>NUCLEOTIDE SEQUENCE [LARGE SCALE GENOMIC DNA]</scope>
    <source>
        <strain>ATCC VR-885 / DSM 19411 / UW-3/Cx</strain>
    </source>
</reference>
<gene>
    <name evidence="1" type="primary">rpsO</name>
    <name type="synonym">rs15</name>
    <name type="ordered locus">CT_843</name>
</gene>
<feature type="chain" id="PRO_0000115413" description="Small ribosomal subunit protein uS15">
    <location>
        <begin position="1"/>
        <end position="89"/>
    </location>
</feature>
<protein>
    <recommendedName>
        <fullName evidence="1">Small ribosomal subunit protein uS15</fullName>
    </recommendedName>
    <alternativeName>
        <fullName evidence="2">30S ribosomal protein S15</fullName>
    </alternativeName>
</protein>
<evidence type="ECO:0000255" key="1">
    <source>
        <dbReference type="HAMAP-Rule" id="MF_01343"/>
    </source>
</evidence>
<evidence type="ECO:0000305" key="2"/>
<accession>P66427</accession>
<accession>O84850</accession>
<sequence>MSLDKGTKEEITKKFQLHEKDTGSADVQIAILTEHITELKEHLKRSPKDQNSRLALLKLVGQRRKLLEYLNSTDTERYKNLIARLNLRK</sequence>
<keyword id="KW-1185">Reference proteome</keyword>
<keyword id="KW-0687">Ribonucleoprotein</keyword>
<keyword id="KW-0689">Ribosomal protein</keyword>
<keyword id="KW-0694">RNA-binding</keyword>
<keyword id="KW-0699">rRNA-binding</keyword>